<sequence length="366" mass="41967">MTPEHLPTEQYEAQLAEKVVRLQSMMAPFSDLVPEVFRSPVSHYRMRAEFRIWHDGDDLYHIIFDQQTKSRIRVDSFPAASELINQLMTAMIAGVRNNPVLRHKLFQIDYLTTLSNQAVVSLLYHKKLDDEWRQEAEALRDALRAQNLNVHLIGRATKTKIELDQDYIDERLPVAGKEMIYRQVENSFTQPNAAMNIQMLEWALDVTKGSKGDLLELYCGNGNFSLALARNFDRVLATEIAKPSVAAAQYNIAANHIDNVQIIRMAAEEFTQAMNGVREFNRLQGIDLKSYQCETIFVDPPRSGLDSETEKMVQAYPRILYISCNPETLCKNLETLSQTHKVERLALFDQFPYTHHMECGVLLTAK</sequence>
<name>TRMA_ECOLI</name>
<dbReference type="EC" id="2.1.1.-" evidence="1"/>
<dbReference type="EC" id="2.1.1.35" evidence="1"/>
<dbReference type="EMBL" id="M57568">
    <property type="protein sequence ID" value="AAA24691.1"/>
    <property type="molecule type" value="Genomic_DNA"/>
</dbReference>
<dbReference type="EMBL" id="U00006">
    <property type="protein sequence ID" value="AAC43071.1"/>
    <property type="molecule type" value="Genomic_DNA"/>
</dbReference>
<dbReference type="EMBL" id="U00096">
    <property type="protein sequence ID" value="AAC76947.1"/>
    <property type="molecule type" value="Genomic_DNA"/>
</dbReference>
<dbReference type="EMBL" id="AP009048">
    <property type="protein sequence ID" value="BAE77346.1"/>
    <property type="molecule type" value="Genomic_DNA"/>
</dbReference>
<dbReference type="EMBL" id="X66026">
    <property type="protein sequence ID" value="CAA46825.1"/>
    <property type="molecule type" value="Genomic_DNA"/>
</dbReference>
<dbReference type="PIR" id="A37321">
    <property type="entry name" value="A37321"/>
</dbReference>
<dbReference type="RefSeq" id="NP_418400.1">
    <property type="nucleotide sequence ID" value="NC_000913.3"/>
</dbReference>
<dbReference type="RefSeq" id="WP_000187022.1">
    <property type="nucleotide sequence ID" value="NZ_STEB01000037.1"/>
</dbReference>
<dbReference type="PDB" id="3BT7">
    <property type="method" value="X-ray"/>
    <property type="resolution" value="2.43 A"/>
    <property type="chains" value="A/B=1-366"/>
</dbReference>
<dbReference type="PDBsum" id="3BT7"/>
<dbReference type="SMR" id="P23003"/>
<dbReference type="BioGRID" id="4260659">
    <property type="interactions" value="1"/>
</dbReference>
<dbReference type="DIP" id="DIP-11031N"/>
<dbReference type="FunCoup" id="P23003">
    <property type="interactions" value="116"/>
</dbReference>
<dbReference type="IntAct" id="P23003">
    <property type="interactions" value="5"/>
</dbReference>
<dbReference type="STRING" id="511145.b3965"/>
<dbReference type="jPOST" id="P23003"/>
<dbReference type="PaxDb" id="511145-b3965"/>
<dbReference type="EnsemblBacteria" id="AAC76947">
    <property type="protein sequence ID" value="AAC76947"/>
    <property type="gene ID" value="b3965"/>
</dbReference>
<dbReference type="GeneID" id="75203203"/>
<dbReference type="GeneID" id="947143"/>
<dbReference type="KEGG" id="ecj:JW3937"/>
<dbReference type="KEGG" id="eco:b3965"/>
<dbReference type="KEGG" id="ecoc:C3026_21425"/>
<dbReference type="PATRIC" id="fig|1411691.4.peg.2739"/>
<dbReference type="EchoBASE" id="EB1015"/>
<dbReference type="eggNOG" id="COG2265">
    <property type="taxonomic scope" value="Bacteria"/>
</dbReference>
<dbReference type="HOGENOM" id="CLU_043022_0_0_6"/>
<dbReference type="InParanoid" id="P23003"/>
<dbReference type="OMA" id="QCNTIFV"/>
<dbReference type="OrthoDB" id="9804590at2"/>
<dbReference type="PhylomeDB" id="P23003"/>
<dbReference type="BioCyc" id="EcoCyc:EG11022-MONOMER"/>
<dbReference type="BioCyc" id="MetaCyc:EG11022-MONOMER"/>
<dbReference type="BRENDA" id="2.1.1.35">
    <property type="organism ID" value="2026"/>
</dbReference>
<dbReference type="EvolutionaryTrace" id="P23003"/>
<dbReference type="PRO" id="PR:P23003"/>
<dbReference type="Proteomes" id="UP000000625">
    <property type="component" value="Chromosome"/>
</dbReference>
<dbReference type="GO" id="GO:0005829">
    <property type="term" value="C:cytosol"/>
    <property type="evidence" value="ECO:0000314"/>
    <property type="project" value="EcoCyc"/>
</dbReference>
<dbReference type="GO" id="GO:0019843">
    <property type="term" value="F:rRNA binding"/>
    <property type="evidence" value="ECO:0000314"/>
    <property type="project" value="EcoCyc"/>
</dbReference>
<dbReference type="GO" id="GO:0030697">
    <property type="term" value="F:tRNA (uracil(54)-C5)-methyltransferase activity, S-adenosyl methionine-dependent"/>
    <property type="evidence" value="ECO:0000314"/>
    <property type="project" value="EcoCyc"/>
</dbReference>
<dbReference type="GO" id="GO:0000049">
    <property type="term" value="F:tRNA binding"/>
    <property type="evidence" value="ECO:0000314"/>
    <property type="project" value="EcoCyc"/>
</dbReference>
<dbReference type="GO" id="GO:0061818">
    <property type="term" value="P:tRNA folding"/>
    <property type="evidence" value="ECO:0000314"/>
    <property type="project" value="EcoCyc"/>
</dbReference>
<dbReference type="GO" id="GO:0030488">
    <property type="term" value="P:tRNA methylation"/>
    <property type="evidence" value="ECO:0000315"/>
    <property type="project" value="EcoCyc"/>
</dbReference>
<dbReference type="CDD" id="cd02440">
    <property type="entry name" value="AdoMet_MTases"/>
    <property type="match status" value="1"/>
</dbReference>
<dbReference type="FunFam" id="2.40.50.1070:FF:000001">
    <property type="entry name" value="tRNA/tmRNA (uracil-C(5))-methyltransferase"/>
    <property type="match status" value="1"/>
</dbReference>
<dbReference type="FunFam" id="3.40.50.150:FF:000012">
    <property type="entry name" value="tRNA/tmRNA (uracil-C(5))-methyltransferase"/>
    <property type="match status" value="1"/>
</dbReference>
<dbReference type="Gene3D" id="2.40.50.1070">
    <property type="match status" value="1"/>
</dbReference>
<dbReference type="Gene3D" id="3.40.50.150">
    <property type="entry name" value="Vaccinia Virus protein VP39"/>
    <property type="match status" value="1"/>
</dbReference>
<dbReference type="HAMAP" id="MF_01011">
    <property type="entry name" value="RNA_methyltr_TrmA"/>
    <property type="match status" value="1"/>
</dbReference>
<dbReference type="InterPro" id="IPR030390">
    <property type="entry name" value="MeTrfase_TrmA_AS"/>
</dbReference>
<dbReference type="InterPro" id="IPR030391">
    <property type="entry name" value="MeTrfase_TrmA_CS"/>
</dbReference>
<dbReference type="InterPro" id="IPR029063">
    <property type="entry name" value="SAM-dependent_MTases_sf"/>
</dbReference>
<dbReference type="InterPro" id="IPR011869">
    <property type="entry name" value="TrmA_MeTrfase"/>
</dbReference>
<dbReference type="InterPro" id="IPR010280">
    <property type="entry name" value="U5_MeTrfase_fam"/>
</dbReference>
<dbReference type="NCBIfam" id="TIGR02143">
    <property type="entry name" value="trmA_only"/>
    <property type="match status" value="1"/>
</dbReference>
<dbReference type="PANTHER" id="PTHR47790">
    <property type="entry name" value="TRNA/TMRNA (URACIL-C(5))-METHYLTRANSFERASE"/>
    <property type="match status" value="1"/>
</dbReference>
<dbReference type="PANTHER" id="PTHR47790:SF2">
    <property type="entry name" value="TRNA_TMRNA (URACIL-C(5))-METHYLTRANSFERASE"/>
    <property type="match status" value="1"/>
</dbReference>
<dbReference type="Pfam" id="PF05958">
    <property type="entry name" value="tRNA_U5-meth_tr"/>
    <property type="match status" value="1"/>
</dbReference>
<dbReference type="SUPFAM" id="SSF53335">
    <property type="entry name" value="S-adenosyl-L-methionine-dependent methyltransferases"/>
    <property type="match status" value="1"/>
</dbReference>
<dbReference type="PROSITE" id="PS51687">
    <property type="entry name" value="SAM_MT_RNA_M5U"/>
    <property type="match status" value="1"/>
</dbReference>
<dbReference type="PROSITE" id="PS01230">
    <property type="entry name" value="TRMA_1"/>
    <property type="match status" value="1"/>
</dbReference>
<dbReference type="PROSITE" id="PS01231">
    <property type="entry name" value="TRMA_2"/>
    <property type="match status" value="1"/>
</dbReference>
<gene>
    <name evidence="1" type="primary">trmA</name>
    <name type="ordered locus">b3965</name>
    <name type="ordered locus">JW3937</name>
</gene>
<keyword id="KW-0002">3D-structure</keyword>
<keyword id="KW-0903">Direct protein sequencing</keyword>
<keyword id="KW-0489">Methyltransferase</keyword>
<keyword id="KW-1185">Reference proteome</keyword>
<keyword id="KW-0949">S-adenosyl-L-methionine</keyword>
<keyword id="KW-0808">Transferase</keyword>
<keyword id="KW-0819">tRNA processing</keyword>
<protein>
    <recommendedName>
        <fullName evidence="1">tRNA/tmRNA (uracil-C(5))-methyltransferase</fullName>
        <ecNumber evidence="1">2.1.1.-</ecNumber>
        <ecNumber evidence="1">2.1.1.35</ecNumber>
    </recommendedName>
    <alternativeName>
        <fullName evidence="1">tRNA (uracil(54)-C(5))-methyltransferase</fullName>
    </alternativeName>
    <alternativeName>
        <fullName evidence="1">tRNA(m5U54)-methyltransferase</fullName>
        <shortName evidence="1">RUMT</shortName>
    </alternativeName>
    <alternativeName>
        <fullName evidence="1">tmRNA (uracil(341)-C(5))-methyltransferase</fullName>
    </alternativeName>
</protein>
<comment type="function">
    <text evidence="1 3 4 5">Dual-specificity methyltransferase that catalyzes the formation of 5-methyluridine at position 54 (m5U54) in all tRNAs, and that of position 341 (m5U341) in tmRNA (transfer-mRNA).</text>
</comment>
<comment type="catalytic activity">
    <reaction evidence="1 3">
        <text>uridine(54) in tRNA + S-adenosyl-L-methionine = 5-methyluridine(54) in tRNA + S-adenosyl-L-homocysteine + H(+)</text>
        <dbReference type="Rhea" id="RHEA:42712"/>
        <dbReference type="Rhea" id="RHEA-COMP:10167"/>
        <dbReference type="Rhea" id="RHEA-COMP:10193"/>
        <dbReference type="ChEBI" id="CHEBI:15378"/>
        <dbReference type="ChEBI" id="CHEBI:57856"/>
        <dbReference type="ChEBI" id="CHEBI:59789"/>
        <dbReference type="ChEBI" id="CHEBI:65315"/>
        <dbReference type="ChEBI" id="CHEBI:74447"/>
        <dbReference type="EC" id="2.1.1.35"/>
    </reaction>
</comment>
<comment type="catalytic activity">
    <reaction evidence="1 3">
        <text>uridine(341) in tmRNA + S-adenosyl-L-methionine = 5-methyluridine(341) in tmRNA + S-adenosyl-L-homocysteine + H(+)</text>
        <dbReference type="Rhea" id="RHEA:43612"/>
        <dbReference type="Rhea" id="RHEA-COMP:10630"/>
        <dbReference type="Rhea" id="RHEA-COMP:10631"/>
        <dbReference type="ChEBI" id="CHEBI:15378"/>
        <dbReference type="ChEBI" id="CHEBI:57856"/>
        <dbReference type="ChEBI" id="CHEBI:59789"/>
        <dbReference type="ChEBI" id="CHEBI:65315"/>
        <dbReference type="ChEBI" id="CHEBI:74447"/>
    </reaction>
</comment>
<comment type="induction">
    <text>Growth rate-dependent regulation of transcription. Is a novel example of a mRNA regulated through a mechanism similar to that of a stable RNA (rRNA).</text>
</comment>
<comment type="disruption phenotype">
    <text evidence="3">Cells lacking this gene exhibit a lack of m5U modification in tmRNA.</text>
</comment>
<comment type="similarity">
    <text evidence="1">Belongs to the class I-like SAM-binding methyltransferase superfamily. RNA M5U methyltransferase family. TrmA subfamily.</text>
</comment>
<proteinExistence type="evidence at protein level"/>
<feature type="chain" id="PRO_0000161859" description="tRNA/tmRNA (uracil-C(5))-methyltransferase">
    <location>
        <begin position="1"/>
        <end position="366"/>
    </location>
</feature>
<feature type="active site" description="Nucleophile" evidence="1 2">
    <location>
        <position position="324"/>
    </location>
</feature>
<feature type="active site" description="Proton acceptor" evidence="1 2">
    <location>
        <position position="358"/>
    </location>
</feature>
<feature type="binding site" evidence="1">
    <location>
        <position position="190"/>
    </location>
    <ligand>
        <name>S-adenosyl-L-methionine</name>
        <dbReference type="ChEBI" id="CHEBI:59789"/>
    </ligand>
</feature>
<feature type="binding site" evidence="1">
    <location>
        <position position="218"/>
    </location>
    <ligand>
        <name>S-adenosyl-L-methionine</name>
        <dbReference type="ChEBI" id="CHEBI:59789"/>
    </ligand>
</feature>
<feature type="binding site" evidence="1">
    <location>
        <position position="223"/>
    </location>
    <ligand>
        <name>S-adenosyl-L-methionine</name>
        <dbReference type="ChEBI" id="CHEBI:59789"/>
    </ligand>
</feature>
<feature type="binding site" evidence="1">
    <location>
        <position position="239"/>
    </location>
    <ligand>
        <name>S-adenosyl-L-methionine</name>
        <dbReference type="ChEBI" id="CHEBI:59789"/>
    </ligand>
</feature>
<feature type="binding site" evidence="1">
    <location>
        <position position="299"/>
    </location>
    <ligand>
        <name>S-adenosyl-L-methionine</name>
        <dbReference type="ChEBI" id="CHEBI:59789"/>
    </ligand>
</feature>
<feature type="site" description="Interaction with RNA">
    <location>
        <position position="190"/>
    </location>
</feature>
<feature type="site" description="Interaction with RNA">
    <location>
        <position position="299"/>
    </location>
</feature>
<feature type="site" description="Interaction with RNA">
    <location>
        <position position="302"/>
    </location>
</feature>
<feature type="mutagenesis site" description="Loss of catalytic activity." evidence="2">
    <original>E</original>
    <variation>Q</variation>
    <location>
        <position position="358"/>
    </location>
</feature>
<feature type="helix" evidence="6">
    <location>
        <begin position="8"/>
        <end position="10"/>
    </location>
</feature>
<feature type="helix" evidence="6">
    <location>
        <begin position="11"/>
        <end position="26"/>
    </location>
</feature>
<feature type="turn" evidence="6">
    <location>
        <begin position="27"/>
        <end position="29"/>
    </location>
</feature>
<feature type="strand" evidence="6">
    <location>
        <begin position="35"/>
        <end position="37"/>
    </location>
</feature>
<feature type="strand" evidence="6">
    <location>
        <begin position="41"/>
        <end position="43"/>
    </location>
</feature>
<feature type="strand" evidence="6">
    <location>
        <begin position="45"/>
        <end position="55"/>
    </location>
</feature>
<feature type="strand" evidence="6">
    <location>
        <begin position="58"/>
        <end position="64"/>
    </location>
</feature>
<feature type="turn" evidence="6">
    <location>
        <begin position="66"/>
        <end position="68"/>
    </location>
</feature>
<feature type="strand" evidence="6">
    <location>
        <begin position="71"/>
        <end position="73"/>
    </location>
</feature>
<feature type="helix" evidence="6">
    <location>
        <begin position="82"/>
        <end position="95"/>
    </location>
</feature>
<feature type="helix" evidence="6">
    <location>
        <begin position="99"/>
        <end position="102"/>
    </location>
</feature>
<feature type="strand" evidence="6">
    <location>
        <begin position="105"/>
        <end position="112"/>
    </location>
</feature>
<feature type="strand" evidence="6">
    <location>
        <begin position="117"/>
        <end position="126"/>
    </location>
</feature>
<feature type="helix" evidence="6">
    <location>
        <begin position="130"/>
        <end position="144"/>
    </location>
</feature>
<feature type="turn" evidence="6">
    <location>
        <begin position="145"/>
        <end position="147"/>
    </location>
</feature>
<feature type="strand" evidence="6">
    <location>
        <begin position="149"/>
        <end position="156"/>
    </location>
</feature>
<feature type="strand" evidence="6">
    <location>
        <begin position="159"/>
        <end position="164"/>
    </location>
</feature>
<feature type="strand" evidence="6">
    <location>
        <begin position="166"/>
        <end position="171"/>
    </location>
</feature>
<feature type="strand" evidence="6">
    <location>
        <begin position="180"/>
        <end position="184"/>
    </location>
</feature>
<feature type="helix" evidence="6">
    <location>
        <begin position="193"/>
        <end position="206"/>
    </location>
</feature>
<feature type="turn" evidence="6">
    <location>
        <begin position="207"/>
        <end position="209"/>
    </location>
</feature>
<feature type="strand" evidence="6">
    <location>
        <begin position="212"/>
        <end position="218"/>
    </location>
</feature>
<feature type="helix" evidence="6">
    <location>
        <begin position="223"/>
        <end position="228"/>
    </location>
</feature>
<feature type="helix" evidence="6">
    <location>
        <begin position="229"/>
        <end position="231"/>
    </location>
</feature>
<feature type="strand" evidence="6">
    <location>
        <begin position="232"/>
        <end position="238"/>
    </location>
</feature>
<feature type="helix" evidence="6">
    <location>
        <begin position="242"/>
        <end position="254"/>
    </location>
</feature>
<feature type="strand" evidence="6">
    <location>
        <begin position="259"/>
        <end position="263"/>
    </location>
</feature>
<feature type="helix" evidence="6">
    <location>
        <begin position="268"/>
        <end position="274"/>
    </location>
</feature>
<feature type="helix" evidence="6">
    <location>
        <begin position="283"/>
        <end position="285"/>
    </location>
</feature>
<feature type="helix" evidence="6">
    <location>
        <begin position="288"/>
        <end position="290"/>
    </location>
</feature>
<feature type="strand" evidence="6">
    <location>
        <begin position="293"/>
        <end position="298"/>
    </location>
</feature>
<feature type="helix" evidence="6">
    <location>
        <begin position="307"/>
        <end position="313"/>
    </location>
</feature>
<feature type="strand" evidence="6">
    <location>
        <begin position="316"/>
        <end position="324"/>
    </location>
</feature>
<feature type="helix" evidence="6">
    <location>
        <begin position="326"/>
        <end position="339"/>
    </location>
</feature>
<feature type="strand" evidence="6">
    <location>
        <begin position="340"/>
        <end position="348"/>
    </location>
</feature>
<feature type="strand" evidence="6">
    <location>
        <begin position="358"/>
        <end position="365"/>
    </location>
</feature>
<organism>
    <name type="scientific">Escherichia coli (strain K12)</name>
    <dbReference type="NCBI Taxonomy" id="83333"/>
    <lineage>
        <taxon>Bacteria</taxon>
        <taxon>Pseudomonadati</taxon>
        <taxon>Pseudomonadota</taxon>
        <taxon>Gammaproteobacteria</taxon>
        <taxon>Enterobacterales</taxon>
        <taxon>Enterobacteriaceae</taxon>
        <taxon>Escherichia</taxon>
    </lineage>
</organism>
<reference key="1">
    <citation type="journal article" date="1991" name="J. Bacteriol.">
        <title>The trmA promoter has regulatory features and sequence elements in common with the rRNA P1 promoter family of Escherichia coli.</title>
        <authorList>
            <person name="Gustafsson C."/>
            <person name="Lindstroem P.H.R."/>
            <person name="Hagervall T.G."/>
            <person name="Esberg K.B."/>
            <person name="Bjoerk G.R."/>
        </authorList>
    </citation>
    <scope>NUCLEOTIDE SEQUENCE [GENOMIC DNA]</scope>
    <scope>PROTEIN SEQUENCE OF 1-18</scope>
    <scope>REGULATION OF TRANSCRIPTION</scope>
</reference>
<reference key="2">
    <citation type="journal article" date="1993" name="Nucleic Acids Res.">
        <title>Analysis of the Escherichia coli genome. IV. DNA sequence of the region from 89.2 to 92.8 minutes.</title>
        <authorList>
            <person name="Blattner F.R."/>
            <person name="Burland V.D."/>
            <person name="Plunkett G. III"/>
            <person name="Sofia H.J."/>
            <person name="Daniels D.L."/>
        </authorList>
    </citation>
    <scope>NUCLEOTIDE SEQUENCE [LARGE SCALE GENOMIC DNA]</scope>
    <source>
        <strain>K12 / MG1655 / ATCC 47076</strain>
    </source>
</reference>
<reference key="3">
    <citation type="journal article" date="1997" name="Science">
        <title>The complete genome sequence of Escherichia coli K-12.</title>
        <authorList>
            <person name="Blattner F.R."/>
            <person name="Plunkett G. III"/>
            <person name="Bloch C.A."/>
            <person name="Perna N.T."/>
            <person name="Burland V."/>
            <person name="Riley M."/>
            <person name="Collado-Vides J."/>
            <person name="Glasner J.D."/>
            <person name="Rode C.K."/>
            <person name="Mayhew G.F."/>
            <person name="Gregor J."/>
            <person name="Davis N.W."/>
            <person name="Kirkpatrick H.A."/>
            <person name="Goeden M.A."/>
            <person name="Rose D.J."/>
            <person name="Mau B."/>
            <person name="Shao Y."/>
        </authorList>
    </citation>
    <scope>NUCLEOTIDE SEQUENCE [LARGE SCALE GENOMIC DNA]</scope>
    <source>
        <strain>K12 / MG1655 / ATCC 47076</strain>
    </source>
</reference>
<reference key="4">
    <citation type="journal article" date="2006" name="Mol. Syst. Biol.">
        <title>Highly accurate genome sequences of Escherichia coli K-12 strains MG1655 and W3110.</title>
        <authorList>
            <person name="Hayashi K."/>
            <person name="Morooka N."/>
            <person name="Yamamoto Y."/>
            <person name="Fujita K."/>
            <person name="Isono K."/>
            <person name="Choi S."/>
            <person name="Ohtsubo E."/>
            <person name="Baba T."/>
            <person name="Wanner B.L."/>
            <person name="Mori H."/>
            <person name="Horiuchi T."/>
        </authorList>
    </citation>
    <scope>NUCLEOTIDE SEQUENCE [LARGE SCALE GENOMIC DNA]</scope>
    <source>
        <strain>K12 / W3110 / ATCC 27325 / DSM 5911</strain>
    </source>
</reference>
<reference key="5">
    <citation type="journal article" date="1992" name="J. Bacteriol.">
        <title>Physical map of the oxyR-trmA region (minute 89.3) of the Escherichia coli chromosome.</title>
        <authorList>
            <person name="Gustafsson C."/>
            <person name="Warne S.R."/>
        </authorList>
    </citation>
    <scope>NUCLEOTIDE SEQUENCE [GENOMIC DNA] OF 353-366</scope>
    <source>
        <strain>K12</strain>
    </source>
</reference>
<reference key="6">
    <citation type="journal article" date="1980" name="J. Bacteriol.">
        <title>Cloning and restriction mapping of the trmA gene coding for transfer ribonucleic acid (5-methyluridine)-methyltransferase in Escherichia coli K-12.</title>
        <authorList>
            <person name="Ny T."/>
            <person name="Bjoerk G.R."/>
        </authorList>
    </citation>
    <scope>FUNCTION</scope>
    <source>
        <strain>K12</strain>
    </source>
</reference>
<reference key="7">
    <citation type="journal article" date="1985" name="J. Bacteriol.">
        <title>Genetic organization and transcription from the gene (trmA) responsible for synthesis of tRNA (uracil-5)-methyltransferase by Escherichia coli.</title>
        <authorList>
            <person name="Lindstreom P.H.R."/>
            <person name="Stueber D."/>
            <person name="Bjoerk G.R."/>
        </authorList>
    </citation>
    <scope>FUNCTION</scope>
    <source>
        <strain>K12</strain>
    </source>
</reference>
<reference key="8">
    <citation type="journal article" date="1997" name="Electrophoresis">
        <title>Escherichia coli proteome analysis using the gene-protein database.</title>
        <authorList>
            <person name="VanBogelen R.A."/>
            <person name="Abshire K.Z."/>
            <person name="Moldover B."/>
            <person name="Olson E.R."/>
            <person name="Neidhardt F.C."/>
        </authorList>
    </citation>
    <scope>IDENTIFICATION BY 2D-GEL</scope>
</reference>
<reference key="9">
    <citation type="journal article" date="2013" name="RNA Biol.">
        <title>RNA-methyltransferase TrmA is a dual-specific enzyme responsible for C(5)-methylation of uridine in both tmRNA and tRNA.</title>
        <authorList>
            <person name="Ranaei-Siadat E."/>
            <person name="Fabret C."/>
            <person name="Seijo B."/>
            <person name="Dardel F."/>
            <person name="Grosjean H."/>
            <person name="Nonin-Lecomte S."/>
        </authorList>
    </citation>
    <scope>FUNCTION AS A TMRNA METHYLTRANSFERASE</scope>
    <scope>CATALYTIC ACTIVITY</scope>
    <scope>DISRUPTION PHENOTYPE</scope>
    <source>
        <strain>K12 / BW25113</strain>
    </source>
</reference>
<reference key="10">
    <citation type="journal article" date="2008" name="Proc. Natl. Acad. Sci. U.S.A.">
        <title>Structure of a TrmA-RNA complex: A consensus RNA fold contributes to substrate selectivity and catalysis in m5U methyltransferases.</title>
        <authorList>
            <person name="Alian A."/>
            <person name="Lee T.T."/>
            <person name="Griner S.L."/>
            <person name="Stroud R.M."/>
            <person name="Finer-Moore J."/>
        </authorList>
    </citation>
    <scope>X-RAY CRYSTALLOGRAPHY (2.43 ANGSTROMS) OF MUTANT GLN-358 IN A COVALENT COMPLEX WITH A 19-NT T ARM ANALOG</scope>
    <scope>MUTAGENESIS OF GLU-358</scope>
    <scope>REACTION MECHANISM</scope>
    <scope>ACTIVE SITE</scope>
</reference>
<evidence type="ECO:0000255" key="1">
    <source>
        <dbReference type="HAMAP-Rule" id="MF_01011"/>
    </source>
</evidence>
<evidence type="ECO:0000269" key="2">
    <source>
    </source>
</evidence>
<evidence type="ECO:0000269" key="3">
    <source>
    </source>
</evidence>
<evidence type="ECO:0000269" key="4">
    <source>
    </source>
</evidence>
<evidence type="ECO:0000269" key="5">
    <source>
    </source>
</evidence>
<evidence type="ECO:0007829" key="6">
    <source>
        <dbReference type="PDB" id="3BT7"/>
    </source>
</evidence>
<accession>P23003</accession>
<accession>Q2M8R0</accession>